<name>SELU_ESCF3</name>
<sequence>MQERHTEQDYRALLIADTPIIDVRAPVEFEQGAMPAAINLPLMNNDERAAVGTCYKQQGSDAALALGHKLVAGEIRQQRMDAWRAACLQNPQGILCCARGGQRSHIVQRWLHEAGIDYPLVEGGYKALRQTAIQATIELAQKPIVLIGGCTGCGKTLLVQQQPNGVDLEGLARHRGSAFGRTLQPQLSQASFENLLAAEMLKTDARQELRLWVLEDESRMIGSNHLPECLRERMTQAAIAVVEDPFEIRLERLNEEYFLRMHHDFIHAYGDEQGWQEYCEYLHHGLSAIKRRLGLQRYNELATRLDAALTTQLATGSTDGHLAWLVPLLEEYYDPMYRYQLEKKAEKVVFRGEWAEVAEWVKAQ</sequence>
<protein>
    <recommendedName>
        <fullName evidence="1">tRNA 2-selenouridine synthase</fullName>
        <ecNumber evidence="1">2.9.1.3</ecNumber>
    </recommendedName>
</protein>
<dbReference type="EC" id="2.9.1.3" evidence="1"/>
<dbReference type="EMBL" id="CU928158">
    <property type="protein sequence ID" value="CAQ88106.1"/>
    <property type="molecule type" value="Genomic_DNA"/>
</dbReference>
<dbReference type="RefSeq" id="WP_001158011.1">
    <property type="nucleotide sequence ID" value="NC_011740.1"/>
</dbReference>
<dbReference type="SMR" id="B7LJH5"/>
<dbReference type="GeneID" id="75058379"/>
<dbReference type="KEGG" id="efe:EFER_0559"/>
<dbReference type="HOGENOM" id="CLU_043456_1_0_6"/>
<dbReference type="OrthoDB" id="9808735at2"/>
<dbReference type="Proteomes" id="UP000000745">
    <property type="component" value="Chromosome"/>
</dbReference>
<dbReference type="GO" id="GO:0016765">
    <property type="term" value="F:transferase activity, transferring alkyl or aryl (other than methyl) groups"/>
    <property type="evidence" value="ECO:0007669"/>
    <property type="project" value="UniProtKB-UniRule"/>
</dbReference>
<dbReference type="GO" id="GO:0043828">
    <property type="term" value="F:tRNA 2-selenouridine synthase activity"/>
    <property type="evidence" value="ECO:0007669"/>
    <property type="project" value="UniProtKB-EC"/>
</dbReference>
<dbReference type="GO" id="GO:0002098">
    <property type="term" value="P:tRNA wobble uridine modification"/>
    <property type="evidence" value="ECO:0007669"/>
    <property type="project" value="UniProtKB-UniRule"/>
</dbReference>
<dbReference type="CDD" id="cd01520">
    <property type="entry name" value="RHOD_YbbB"/>
    <property type="match status" value="1"/>
</dbReference>
<dbReference type="FunFam" id="3.40.250.10:FF:000009">
    <property type="entry name" value="tRNA 2-selenouridine/geranyl-2-thiouridine synthase"/>
    <property type="match status" value="1"/>
</dbReference>
<dbReference type="Gene3D" id="3.40.250.10">
    <property type="entry name" value="Rhodanese-like domain"/>
    <property type="match status" value="1"/>
</dbReference>
<dbReference type="HAMAP" id="MF_01622">
    <property type="entry name" value="tRNA_sel_U_synth"/>
    <property type="match status" value="1"/>
</dbReference>
<dbReference type="InterPro" id="IPR027417">
    <property type="entry name" value="P-loop_NTPase"/>
</dbReference>
<dbReference type="InterPro" id="IPR001763">
    <property type="entry name" value="Rhodanese-like_dom"/>
</dbReference>
<dbReference type="InterPro" id="IPR036873">
    <property type="entry name" value="Rhodanese-like_dom_sf"/>
</dbReference>
<dbReference type="InterPro" id="IPR017582">
    <property type="entry name" value="SelU"/>
</dbReference>
<dbReference type="NCBIfam" id="NF008749">
    <property type="entry name" value="PRK11784.1-1"/>
    <property type="match status" value="1"/>
</dbReference>
<dbReference type="NCBIfam" id="NF008751">
    <property type="entry name" value="PRK11784.1-3"/>
    <property type="match status" value="1"/>
</dbReference>
<dbReference type="NCBIfam" id="TIGR03167">
    <property type="entry name" value="tRNA_sel_U_synt"/>
    <property type="match status" value="1"/>
</dbReference>
<dbReference type="PANTHER" id="PTHR30401">
    <property type="entry name" value="TRNA 2-SELENOURIDINE SYNTHASE"/>
    <property type="match status" value="1"/>
</dbReference>
<dbReference type="PANTHER" id="PTHR30401:SF0">
    <property type="entry name" value="TRNA 2-SELENOURIDINE SYNTHASE"/>
    <property type="match status" value="1"/>
</dbReference>
<dbReference type="Pfam" id="PF00581">
    <property type="entry name" value="Rhodanese"/>
    <property type="match status" value="1"/>
</dbReference>
<dbReference type="SMART" id="SM00450">
    <property type="entry name" value="RHOD"/>
    <property type="match status" value="1"/>
</dbReference>
<dbReference type="SUPFAM" id="SSF52540">
    <property type="entry name" value="P-loop containing nucleoside triphosphate hydrolases"/>
    <property type="match status" value="1"/>
</dbReference>
<dbReference type="SUPFAM" id="SSF52821">
    <property type="entry name" value="Rhodanese/Cell cycle control phosphatase"/>
    <property type="match status" value="1"/>
</dbReference>
<dbReference type="PROSITE" id="PS50206">
    <property type="entry name" value="RHODANESE_3"/>
    <property type="match status" value="1"/>
</dbReference>
<evidence type="ECO:0000255" key="1">
    <source>
        <dbReference type="HAMAP-Rule" id="MF_01622"/>
    </source>
</evidence>
<accession>B7LJH5</accession>
<feature type="chain" id="PRO_1000186075" description="tRNA 2-selenouridine synthase">
    <location>
        <begin position="1"/>
        <end position="364"/>
    </location>
</feature>
<feature type="domain" description="Rhodanese" evidence="1">
    <location>
        <begin position="14"/>
        <end position="137"/>
    </location>
</feature>
<feature type="active site" description="S-selanylcysteine intermediate" evidence="1">
    <location>
        <position position="97"/>
    </location>
</feature>
<organism>
    <name type="scientific">Escherichia fergusonii (strain ATCC 35469 / DSM 13698 / CCUG 18766 / IAM 14443 / JCM 21226 / LMG 7866 / NBRC 102419 / NCTC 12128 / CDC 0568-73)</name>
    <dbReference type="NCBI Taxonomy" id="585054"/>
    <lineage>
        <taxon>Bacteria</taxon>
        <taxon>Pseudomonadati</taxon>
        <taxon>Pseudomonadota</taxon>
        <taxon>Gammaproteobacteria</taxon>
        <taxon>Enterobacterales</taxon>
        <taxon>Enterobacteriaceae</taxon>
        <taxon>Escherichia</taxon>
    </lineage>
</organism>
<reference key="1">
    <citation type="journal article" date="2009" name="PLoS Genet.">
        <title>Organised genome dynamics in the Escherichia coli species results in highly diverse adaptive paths.</title>
        <authorList>
            <person name="Touchon M."/>
            <person name="Hoede C."/>
            <person name="Tenaillon O."/>
            <person name="Barbe V."/>
            <person name="Baeriswyl S."/>
            <person name="Bidet P."/>
            <person name="Bingen E."/>
            <person name="Bonacorsi S."/>
            <person name="Bouchier C."/>
            <person name="Bouvet O."/>
            <person name="Calteau A."/>
            <person name="Chiapello H."/>
            <person name="Clermont O."/>
            <person name="Cruveiller S."/>
            <person name="Danchin A."/>
            <person name="Diard M."/>
            <person name="Dossat C."/>
            <person name="Karoui M.E."/>
            <person name="Frapy E."/>
            <person name="Garry L."/>
            <person name="Ghigo J.M."/>
            <person name="Gilles A.M."/>
            <person name="Johnson J."/>
            <person name="Le Bouguenec C."/>
            <person name="Lescat M."/>
            <person name="Mangenot S."/>
            <person name="Martinez-Jehanne V."/>
            <person name="Matic I."/>
            <person name="Nassif X."/>
            <person name="Oztas S."/>
            <person name="Petit M.A."/>
            <person name="Pichon C."/>
            <person name="Rouy Z."/>
            <person name="Ruf C.S."/>
            <person name="Schneider D."/>
            <person name="Tourret J."/>
            <person name="Vacherie B."/>
            <person name="Vallenet D."/>
            <person name="Medigue C."/>
            <person name="Rocha E.P.C."/>
            <person name="Denamur E."/>
        </authorList>
    </citation>
    <scope>NUCLEOTIDE SEQUENCE [LARGE SCALE GENOMIC DNA]</scope>
    <source>
        <strain>ATCC 35469 / DSM 13698 / BCRC 15582 / CCUG 18766 / IAM 14443 / JCM 21226 / LMG 7866 / NBRC 102419 / NCTC 12128 / CDC 0568-73</strain>
    </source>
</reference>
<keyword id="KW-0711">Selenium</keyword>
<keyword id="KW-0808">Transferase</keyword>
<comment type="function">
    <text evidence="1">Involved in the post-transcriptional modification of the uridine at the wobble position (U34) of tRNA(Lys), tRNA(Glu) and tRNA(Gln). Catalyzes the conversion of 2-thiouridine (S2U-RNA) to 2-selenouridine (Se2U-RNA). Acts in a two-step process involving geranylation of 2-thiouridine (S2U) to S-geranyl-2-thiouridine (geS2U) and subsequent selenation of the latter derivative to 2-selenouridine (Se2U) in the tRNA chain.</text>
</comment>
<comment type="catalytic activity">
    <reaction evidence="1">
        <text>5-methylaminomethyl-2-thiouridine(34) in tRNA + selenophosphate + (2E)-geranyl diphosphate + H2O + H(+) = 5-methylaminomethyl-2-selenouridine(34) in tRNA + (2E)-thiogeraniol + phosphate + diphosphate</text>
        <dbReference type="Rhea" id="RHEA:42716"/>
        <dbReference type="Rhea" id="RHEA-COMP:10195"/>
        <dbReference type="Rhea" id="RHEA-COMP:10196"/>
        <dbReference type="ChEBI" id="CHEBI:15377"/>
        <dbReference type="ChEBI" id="CHEBI:15378"/>
        <dbReference type="ChEBI" id="CHEBI:16144"/>
        <dbReference type="ChEBI" id="CHEBI:33019"/>
        <dbReference type="ChEBI" id="CHEBI:43474"/>
        <dbReference type="ChEBI" id="CHEBI:58057"/>
        <dbReference type="ChEBI" id="CHEBI:74455"/>
        <dbReference type="ChEBI" id="CHEBI:82743"/>
        <dbReference type="ChEBI" id="CHEBI:143703"/>
        <dbReference type="EC" id="2.9.1.3"/>
    </reaction>
    <physiologicalReaction direction="left-to-right" evidence="1">
        <dbReference type="Rhea" id="RHEA:42717"/>
    </physiologicalReaction>
</comment>
<comment type="catalytic activity">
    <reaction evidence="1">
        <text>5-methylaminomethyl-2-thiouridine(34) in tRNA + (2E)-geranyl diphosphate = 5-methylaminomethyl-S-(2E)-geranyl-thiouridine(34) in tRNA + diphosphate</text>
        <dbReference type="Rhea" id="RHEA:14085"/>
        <dbReference type="Rhea" id="RHEA-COMP:10195"/>
        <dbReference type="Rhea" id="RHEA-COMP:14654"/>
        <dbReference type="ChEBI" id="CHEBI:33019"/>
        <dbReference type="ChEBI" id="CHEBI:58057"/>
        <dbReference type="ChEBI" id="CHEBI:74455"/>
        <dbReference type="ChEBI" id="CHEBI:140632"/>
    </reaction>
    <physiologicalReaction direction="left-to-right" evidence="1">
        <dbReference type="Rhea" id="RHEA:14086"/>
    </physiologicalReaction>
</comment>
<comment type="catalytic activity">
    <reaction evidence="1">
        <text>5-methylaminomethyl-S-(2E)-geranyl-thiouridine(34) in tRNA + selenophosphate + H(+) = 5-methylaminomethyl-2-(Se-phospho)selenouridine(34) in tRNA + (2E)-thiogeraniol</text>
        <dbReference type="Rhea" id="RHEA:60172"/>
        <dbReference type="Rhea" id="RHEA-COMP:14654"/>
        <dbReference type="Rhea" id="RHEA-COMP:15523"/>
        <dbReference type="ChEBI" id="CHEBI:15378"/>
        <dbReference type="ChEBI" id="CHEBI:16144"/>
        <dbReference type="ChEBI" id="CHEBI:140632"/>
        <dbReference type="ChEBI" id="CHEBI:143702"/>
        <dbReference type="ChEBI" id="CHEBI:143703"/>
    </reaction>
    <physiologicalReaction direction="left-to-right" evidence="1">
        <dbReference type="Rhea" id="RHEA:60173"/>
    </physiologicalReaction>
</comment>
<comment type="catalytic activity">
    <reaction evidence="1">
        <text>5-methylaminomethyl-2-(Se-phospho)selenouridine(34) in tRNA + H2O = 5-methylaminomethyl-2-selenouridine(34) in tRNA + phosphate</text>
        <dbReference type="Rhea" id="RHEA:60176"/>
        <dbReference type="Rhea" id="RHEA-COMP:10196"/>
        <dbReference type="Rhea" id="RHEA-COMP:15523"/>
        <dbReference type="ChEBI" id="CHEBI:15377"/>
        <dbReference type="ChEBI" id="CHEBI:43474"/>
        <dbReference type="ChEBI" id="CHEBI:82743"/>
        <dbReference type="ChEBI" id="CHEBI:143702"/>
    </reaction>
    <physiologicalReaction direction="left-to-right" evidence="1">
        <dbReference type="Rhea" id="RHEA:60177"/>
    </physiologicalReaction>
</comment>
<comment type="subunit">
    <text evidence="1">Monomer.</text>
</comment>
<comment type="similarity">
    <text evidence="1">Belongs to the SelU family.</text>
</comment>
<proteinExistence type="inferred from homology"/>
<gene>
    <name evidence="1" type="primary">selU</name>
    <name type="ordered locus">EFER_0559</name>
</gene>